<sequence length="643" mass="71944">MAEFETTFADLGLKAPILEALTDLGYEKPSPIQAECIPHLLDGRDVLGMAQTGSGKTAAFSLPLLNNIDPELRAPQILVLAPTRELAVQVAEAMTEFSKHMRGVNVVALYGGQRYDVQLRALRQGPQIVVGTPGRLLDHLKRGTLDLSKLSGLVLDEADEMLRMGFIEDVETIMAQIPEGHQTALFSATMPEAIRRITRRFMKEPQEVRIQSSVTTRPDISQSYWTAYGMRKNEALVRFLEAEDFDAAIIFVRTKNATLEVAEALERNGYNSAALNGDMNQALREQALERLKDGRLDILIATDVAARGLDVERISLVVNYDIPMDSESYVHRIGRTGRAGRAGRALLFVENRERRLLRNIERTMKLTIPEVELPNAELLSKRRLEKFAAKVQQQLESSDLDQYRALLAKIHATAEGEELDVETLAAALLKMAQGERSLIVPPVAPMRPRREFRDRDDSFDRRGDRNDRGPRGDREDRPKRERRDVGDMELYRIEVGRDDGVEVRHIVGAIANEGDISSRYIGNIKLFASHSTIELPKGMPGEVLQHFTRTRILNKPMNMQLLGDAQPRTERRGGGERREGGRGFGGERREGGRGFGGERREGGRGEGRRFSGERREGRAPGRDDASAPRRDDSAGRRRFGGDA</sequence>
<gene>
    <name evidence="2" type="primary">deaD</name>
    <name evidence="2" type="synonym">csdA</name>
</gene>
<evidence type="ECO:0000250" key="1"/>
<evidence type="ECO:0000255" key="2">
    <source>
        <dbReference type="HAMAP-Rule" id="MF_00964"/>
    </source>
</evidence>
<evidence type="ECO:0000256" key="3">
    <source>
        <dbReference type="SAM" id="MobiDB-lite"/>
    </source>
</evidence>
<evidence type="ECO:0000305" key="4"/>
<protein>
    <recommendedName>
        <fullName evidence="2">ATP-dependent RNA helicase DeaD</fullName>
        <ecNumber evidence="2">3.6.4.13</ecNumber>
    </recommendedName>
    <alternativeName>
        <fullName evidence="2">Cold-shock DEAD box protein A</fullName>
    </alternativeName>
</protein>
<reference key="1">
    <citation type="journal article" date="1994" name="J. Biochem.">
        <title>Nucleotide sequence and expression in Escherichia coli of the Klebsiella pneumoniae deaD gene.</title>
        <authorList>
            <person name="Peng H.L."/>
            <person name="Hsieh M.J."/>
            <person name="Zao C.L."/>
            <person name="Chang H.-Y."/>
        </authorList>
    </citation>
    <scope>NUCLEOTIDE SEQUENCE [GENOMIC DNA]</scope>
    <source>
        <strain>CG43</strain>
    </source>
</reference>
<comment type="function">
    <text evidence="2">DEAD-box RNA helicase involved in various cellular processes at low temperature, including ribosome biogenesis, mRNA degradation and translation initiation.</text>
</comment>
<comment type="catalytic activity">
    <reaction evidence="2">
        <text>ATP + H2O = ADP + phosphate + H(+)</text>
        <dbReference type="Rhea" id="RHEA:13065"/>
        <dbReference type="ChEBI" id="CHEBI:15377"/>
        <dbReference type="ChEBI" id="CHEBI:15378"/>
        <dbReference type="ChEBI" id="CHEBI:30616"/>
        <dbReference type="ChEBI" id="CHEBI:43474"/>
        <dbReference type="ChEBI" id="CHEBI:456216"/>
        <dbReference type="EC" id="3.6.4.13"/>
    </reaction>
</comment>
<comment type="subcellular location">
    <subcellularLocation>
        <location evidence="2">Cytoplasm</location>
    </subcellularLocation>
</comment>
<comment type="similarity">
    <text evidence="2">Belongs to the DEAD box helicase family. DeaD/CsdA subfamily.</text>
</comment>
<comment type="sequence caution" evidence="4">
    <conflict type="erroneous initiation">
        <sequence resource="EMBL-CDS" id="AAA61345"/>
    </conflict>
</comment>
<organism>
    <name type="scientific">Klebsiella pneumoniae</name>
    <dbReference type="NCBI Taxonomy" id="573"/>
    <lineage>
        <taxon>Bacteria</taxon>
        <taxon>Pseudomonadati</taxon>
        <taxon>Pseudomonadota</taxon>
        <taxon>Gammaproteobacteria</taxon>
        <taxon>Enterobacterales</taxon>
        <taxon>Enterobacteriaceae</taxon>
        <taxon>Klebsiella/Raoultella group</taxon>
        <taxon>Klebsiella</taxon>
        <taxon>Klebsiella pneumoniae complex</taxon>
    </lineage>
</organism>
<name>DEAD_KLEPN</name>
<keyword id="KW-0067">ATP-binding</keyword>
<keyword id="KW-0963">Cytoplasm</keyword>
<keyword id="KW-0347">Helicase</keyword>
<keyword id="KW-0378">Hydrolase</keyword>
<keyword id="KW-0547">Nucleotide-binding</keyword>
<keyword id="KW-0694">RNA-binding</keyword>
<keyword id="KW-0346">Stress response</keyword>
<proteinExistence type="inferred from homology"/>
<dbReference type="EC" id="3.6.4.13" evidence="2"/>
<dbReference type="EMBL" id="L08387">
    <property type="protein sequence ID" value="AAA61345.1"/>
    <property type="status" value="ALT_INIT"/>
    <property type="molecule type" value="Genomic_DNA"/>
</dbReference>
<dbReference type="PIR" id="JX0314">
    <property type="entry name" value="JX0314"/>
</dbReference>
<dbReference type="SMR" id="P33906"/>
<dbReference type="GO" id="GO:0005829">
    <property type="term" value="C:cytosol"/>
    <property type="evidence" value="ECO:0007669"/>
    <property type="project" value="TreeGrafter"/>
</dbReference>
<dbReference type="GO" id="GO:0005840">
    <property type="term" value="C:ribosome"/>
    <property type="evidence" value="ECO:0007669"/>
    <property type="project" value="TreeGrafter"/>
</dbReference>
<dbReference type="GO" id="GO:0005524">
    <property type="term" value="F:ATP binding"/>
    <property type="evidence" value="ECO:0007669"/>
    <property type="project" value="UniProtKB-UniRule"/>
</dbReference>
<dbReference type="GO" id="GO:0016887">
    <property type="term" value="F:ATP hydrolysis activity"/>
    <property type="evidence" value="ECO:0007669"/>
    <property type="project" value="RHEA"/>
</dbReference>
<dbReference type="GO" id="GO:0003724">
    <property type="term" value="F:RNA helicase activity"/>
    <property type="evidence" value="ECO:0007669"/>
    <property type="project" value="UniProtKB-UniRule"/>
</dbReference>
<dbReference type="GO" id="GO:0033592">
    <property type="term" value="F:RNA strand annealing activity"/>
    <property type="evidence" value="ECO:0007669"/>
    <property type="project" value="TreeGrafter"/>
</dbReference>
<dbReference type="GO" id="GO:0070417">
    <property type="term" value="P:cellular response to cold"/>
    <property type="evidence" value="ECO:0007669"/>
    <property type="project" value="InterPro"/>
</dbReference>
<dbReference type="GO" id="GO:0000027">
    <property type="term" value="P:ribosomal large subunit assembly"/>
    <property type="evidence" value="ECO:0007669"/>
    <property type="project" value="UniProtKB-UniRule"/>
</dbReference>
<dbReference type="GO" id="GO:0006401">
    <property type="term" value="P:RNA catabolic process"/>
    <property type="evidence" value="ECO:0007669"/>
    <property type="project" value="UniProtKB-UniRule"/>
</dbReference>
<dbReference type="CDD" id="cd00268">
    <property type="entry name" value="DEADc"/>
    <property type="match status" value="1"/>
</dbReference>
<dbReference type="CDD" id="cd12499">
    <property type="entry name" value="RRM_EcCsdA_like"/>
    <property type="match status" value="1"/>
</dbReference>
<dbReference type="CDD" id="cd18787">
    <property type="entry name" value="SF2_C_DEAD"/>
    <property type="match status" value="1"/>
</dbReference>
<dbReference type="FunFam" id="3.30.70.330:FF:000068">
    <property type="entry name" value="ATP-dependent RNA helicase DeaD"/>
    <property type="match status" value="1"/>
</dbReference>
<dbReference type="FunFam" id="3.40.50.300:FF:000374">
    <property type="entry name" value="ATP-dependent RNA helicase DeaD"/>
    <property type="match status" value="1"/>
</dbReference>
<dbReference type="FunFam" id="3.40.50.300:FF:000108">
    <property type="entry name" value="ATP-dependent RNA helicase RhlE"/>
    <property type="match status" value="1"/>
</dbReference>
<dbReference type="Gene3D" id="3.30.70.330">
    <property type="match status" value="1"/>
</dbReference>
<dbReference type="Gene3D" id="3.40.50.300">
    <property type="entry name" value="P-loop containing nucleotide triphosphate hydrolases"/>
    <property type="match status" value="2"/>
</dbReference>
<dbReference type="HAMAP" id="MF_00964">
    <property type="entry name" value="DEAD_helicase_DeaD"/>
    <property type="match status" value="1"/>
</dbReference>
<dbReference type="InterPro" id="IPR021046">
    <property type="entry name" value="Cold-shock_DEAD_Abox_C"/>
</dbReference>
<dbReference type="InterPro" id="IPR034415">
    <property type="entry name" value="CsdA_RRM"/>
</dbReference>
<dbReference type="InterPro" id="IPR005580">
    <property type="entry name" value="DbpA/CsdA_RNA-bd_dom"/>
</dbReference>
<dbReference type="InterPro" id="IPR011545">
    <property type="entry name" value="DEAD/DEAH_box_helicase_dom"/>
</dbReference>
<dbReference type="InterPro" id="IPR050547">
    <property type="entry name" value="DEAD_box_RNA_helicases"/>
</dbReference>
<dbReference type="InterPro" id="IPR028618">
    <property type="entry name" value="DEAD_helicase_DeaD"/>
</dbReference>
<dbReference type="InterPro" id="IPR014001">
    <property type="entry name" value="Helicase_ATP-bd"/>
</dbReference>
<dbReference type="InterPro" id="IPR001650">
    <property type="entry name" value="Helicase_C-like"/>
</dbReference>
<dbReference type="InterPro" id="IPR012677">
    <property type="entry name" value="Nucleotide-bd_a/b_plait_sf"/>
</dbReference>
<dbReference type="InterPro" id="IPR027417">
    <property type="entry name" value="P-loop_NTPase"/>
</dbReference>
<dbReference type="InterPro" id="IPR000629">
    <property type="entry name" value="RNA-helicase_DEAD-box_CS"/>
</dbReference>
<dbReference type="InterPro" id="IPR014014">
    <property type="entry name" value="RNA_helicase_DEAD_Q_motif"/>
</dbReference>
<dbReference type="NCBIfam" id="NF008642">
    <property type="entry name" value="PRK11634.1"/>
    <property type="match status" value="1"/>
</dbReference>
<dbReference type="PANTHER" id="PTHR47963:SF8">
    <property type="entry name" value="ATP-DEPENDENT RNA HELICASE DEAD"/>
    <property type="match status" value="1"/>
</dbReference>
<dbReference type="PANTHER" id="PTHR47963">
    <property type="entry name" value="DEAD-BOX ATP-DEPENDENT RNA HELICASE 47, MITOCHONDRIAL"/>
    <property type="match status" value="1"/>
</dbReference>
<dbReference type="Pfam" id="PF03880">
    <property type="entry name" value="DbpA"/>
    <property type="match status" value="1"/>
</dbReference>
<dbReference type="Pfam" id="PF00270">
    <property type="entry name" value="DEAD"/>
    <property type="match status" value="1"/>
</dbReference>
<dbReference type="Pfam" id="PF12343">
    <property type="entry name" value="DeaD_C"/>
    <property type="match status" value="1"/>
</dbReference>
<dbReference type="Pfam" id="PF25399">
    <property type="entry name" value="DeaD_dimer"/>
    <property type="match status" value="1"/>
</dbReference>
<dbReference type="Pfam" id="PF00271">
    <property type="entry name" value="Helicase_C"/>
    <property type="match status" value="1"/>
</dbReference>
<dbReference type="SMART" id="SM00487">
    <property type="entry name" value="DEXDc"/>
    <property type="match status" value="1"/>
</dbReference>
<dbReference type="SMART" id="SM00490">
    <property type="entry name" value="HELICc"/>
    <property type="match status" value="1"/>
</dbReference>
<dbReference type="SUPFAM" id="SSF52540">
    <property type="entry name" value="P-loop containing nucleoside triphosphate hydrolases"/>
    <property type="match status" value="1"/>
</dbReference>
<dbReference type="PROSITE" id="PS00039">
    <property type="entry name" value="DEAD_ATP_HELICASE"/>
    <property type="match status" value="1"/>
</dbReference>
<dbReference type="PROSITE" id="PS51192">
    <property type="entry name" value="HELICASE_ATP_BIND_1"/>
    <property type="match status" value="1"/>
</dbReference>
<dbReference type="PROSITE" id="PS51194">
    <property type="entry name" value="HELICASE_CTER"/>
    <property type="match status" value="1"/>
</dbReference>
<dbReference type="PROSITE" id="PS51195">
    <property type="entry name" value="Q_MOTIF"/>
    <property type="match status" value="1"/>
</dbReference>
<feature type="initiator methionine" description="Removed" evidence="1">
    <location>
        <position position="1"/>
    </location>
</feature>
<feature type="chain" id="PRO_0000055105" description="ATP-dependent RNA helicase DeaD">
    <location>
        <begin position="2"/>
        <end position="643"/>
    </location>
</feature>
<feature type="domain" description="Helicase ATP-binding" evidence="2">
    <location>
        <begin position="37"/>
        <end position="208"/>
    </location>
</feature>
<feature type="domain" description="Helicase C-terminal" evidence="2">
    <location>
        <begin position="232"/>
        <end position="379"/>
    </location>
</feature>
<feature type="region of interest" description="Disordered" evidence="3">
    <location>
        <begin position="440"/>
        <end position="482"/>
    </location>
</feature>
<feature type="region of interest" description="Disordered" evidence="3">
    <location>
        <begin position="557"/>
        <end position="643"/>
    </location>
</feature>
<feature type="short sequence motif" description="Q motif">
    <location>
        <begin position="6"/>
        <end position="34"/>
    </location>
</feature>
<feature type="short sequence motif" description="DEAD box">
    <location>
        <begin position="156"/>
        <end position="159"/>
    </location>
</feature>
<feature type="compositionally biased region" description="Basic and acidic residues" evidence="3">
    <location>
        <begin position="448"/>
        <end position="482"/>
    </location>
</feature>
<feature type="compositionally biased region" description="Basic and acidic residues" evidence="3">
    <location>
        <begin position="567"/>
        <end position="643"/>
    </location>
</feature>
<feature type="binding site" evidence="2">
    <location>
        <begin position="50"/>
        <end position="57"/>
    </location>
    <ligand>
        <name>ATP</name>
        <dbReference type="ChEBI" id="CHEBI:30616"/>
    </ligand>
</feature>
<accession>P33906</accession>